<accession>Q9BWS9</accession>
<accession>B3KWB0</accession>
<accession>Q8NBM9</accession>
<accession>Q96CZ3</accession>
<accession>Q96S93</accession>
<accession>Q96SK0</accession>
<accession>Q9BY52</accession>
<reference key="1">
    <citation type="journal article" date="2006" name="Blood">
        <title>Novel stabilin-1 interacting chitinase-like protein (SI-CLP) is up-regulated in alternatively activated macrophages and secreted via lysosomal pathway.</title>
        <authorList>
            <person name="Kzhyshkowska J."/>
            <person name="Mamidi S."/>
            <person name="Gratchev A."/>
            <person name="Kremmer E."/>
            <person name="Schmuttermaier C."/>
            <person name="Krusell L."/>
            <person name="Haus G."/>
            <person name="Utikal J."/>
            <person name="Schledzewski K."/>
            <person name="Scholtze J."/>
            <person name="Goerdt S."/>
        </authorList>
    </citation>
    <scope>NUCLEOTIDE SEQUENCE [MRNA] (ISOFORM 1)</scope>
    <scope>INDUCTION</scope>
    <scope>SUBCELLULAR LOCATION</scope>
    <scope>INTERACTION WITH STAB1</scope>
    <scope>TISSUE SPECIFICITY</scope>
</reference>
<reference key="2">
    <citation type="submission" date="1999-12" db="EMBL/GenBank/DDBJ databases">
        <title>A novel gene expressed in human liver non-tumor tissues.</title>
        <authorList>
            <person name="Li Y."/>
            <person name="Wu T."/>
            <person name="Xu S."/>
            <person name="Ren S."/>
            <person name="Chen Z."/>
            <person name="Han Z."/>
        </authorList>
    </citation>
    <scope>NUCLEOTIDE SEQUENCE [LARGE SCALE MRNA] (ISOFORM 1)</scope>
    <scope>VARIANT VAL-338</scope>
    <source>
        <tissue>Liver</tissue>
    </source>
</reference>
<reference key="3">
    <citation type="submission" date="2001-05" db="EMBL/GenBank/DDBJ databases">
        <authorList>
            <person name="Li N."/>
            <person name="Wan T."/>
            <person name="Zhang W."/>
            <person name="Cao X."/>
        </authorList>
    </citation>
    <scope>NUCLEOTIDE SEQUENCE [LARGE SCALE MRNA] (ISOFORM 3)</scope>
</reference>
<reference key="4">
    <citation type="journal article" date="2004" name="Nat. Genet.">
        <title>Complete sequencing and characterization of 21,243 full-length human cDNAs.</title>
        <authorList>
            <person name="Ota T."/>
            <person name="Suzuki Y."/>
            <person name="Nishikawa T."/>
            <person name="Otsuki T."/>
            <person name="Sugiyama T."/>
            <person name="Irie R."/>
            <person name="Wakamatsu A."/>
            <person name="Hayashi K."/>
            <person name="Sato H."/>
            <person name="Nagai K."/>
            <person name="Kimura K."/>
            <person name="Makita H."/>
            <person name="Sekine M."/>
            <person name="Obayashi M."/>
            <person name="Nishi T."/>
            <person name="Shibahara T."/>
            <person name="Tanaka T."/>
            <person name="Ishii S."/>
            <person name="Yamamoto J."/>
            <person name="Saito K."/>
            <person name="Kawai Y."/>
            <person name="Isono Y."/>
            <person name="Nakamura Y."/>
            <person name="Nagahari K."/>
            <person name="Murakami K."/>
            <person name="Yasuda T."/>
            <person name="Iwayanagi T."/>
            <person name="Wagatsuma M."/>
            <person name="Shiratori A."/>
            <person name="Sudo H."/>
            <person name="Hosoiri T."/>
            <person name="Kaku Y."/>
            <person name="Kodaira H."/>
            <person name="Kondo H."/>
            <person name="Sugawara M."/>
            <person name="Takahashi M."/>
            <person name="Kanda K."/>
            <person name="Yokoi T."/>
            <person name="Furuya T."/>
            <person name="Kikkawa E."/>
            <person name="Omura Y."/>
            <person name="Abe K."/>
            <person name="Kamihara K."/>
            <person name="Katsuta N."/>
            <person name="Sato K."/>
            <person name="Tanikawa M."/>
            <person name="Yamazaki M."/>
            <person name="Ninomiya K."/>
            <person name="Ishibashi T."/>
            <person name="Yamashita H."/>
            <person name="Murakawa K."/>
            <person name="Fujimori K."/>
            <person name="Tanai H."/>
            <person name="Kimata M."/>
            <person name="Watanabe M."/>
            <person name="Hiraoka S."/>
            <person name="Chiba Y."/>
            <person name="Ishida S."/>
            <person name="Ono Y."/>
            <person name="Takiguchi S."/>
            <person name="Watanabe S."/>
            <person name="Yosida M."/>
            <person name="Hotuta T."/>
            <person name="Kusano J."/>
            <person name="Kanehori K."/>
            <person name="Takahashi-Fujii A."/>
            <person name="Hara H."/>
            <person name="Tanase T.-O."/>
            <person name="Nomura Y."/>
            <person name="Togiya S."/>
            <person name="Komai F."/>
            <person name="Hara R."/>
            <person name="Takeuchi K."/>
            <person name="Arita M."/>
            <person name="Imose N."/>
            <person name="Musashino K."/>
            <person name="Yuuki H."/>
            <person name="Oshima A."/>
            <person name="Sasaki N."/>
            <person name="Aotsuka S."/>
            <person name="Yoshikawa Y."/>
            <person name="Matsunawa H."/>
            <person name="Ichihara T."/>
            <person name="Shiohata N."/>
            <person name="Sano S."/>
            <person name="Moriya S."/>
            <person name="Momiyama H."/>
            <person name="Satoh N."/>
            <person name="Takami S."/>
            <person name="Terashima Y."/>
            <person name="Suzuki O."/>
            <person name="Nakagawa S."/>
            <person name="Senoh A."/>
            <person name="Mizoguchi H."/>
            <person name="Goto Y."/>
            <person name="Shimizu F."/>
            <person name="Wakebe H."/>
            <person name="Hishigaki H."/>
            <person name="Watanabe T."/>
            <person name="Sugiyama A."/>
            <person name="Takemoto M."/>
            <person name="Kawakami B."/>
            <person name="Yamazaki M."/>
            <person name="Watanabe K."/>
            <person name="Kumagai A."/>
            <person name="Itakura S."/>
            <person name="Fukuzumi Y."/>
            <person name="Fujimori Y."/>
            <person name="Komiyama M."/>
            <person name="Tashiro H."/>
            <person name="Tanigami A."/>
            <person name="Fujiwara T."/>
            <person name="Ono T."/>
            <person name="Yamada K."/>
            <person name="Fujii Y."/>
            <person name="Ozaki K."/>
            <person name="Hirao M."/>
            <person name="Ohmori Y."/>
            <person name="Kawabata A."/>
            <person name="Hikiji T."/>
            <person name="Kobatake N."/>
            <person name="Inagaki H."/>
            <person name="Ikema Y."/>
            <person name="Okamoto S."/>
            <person name="Okitani R."/>
            <person name="Kawakami T."/>
            <person name="Noguchi S."/>
            <person name="Itoh T."/>
            <person name="Shigeta K."/>
            <person name="Senba T."/>
            <person name="Matsumura K."/>
            <person name="Nakajima Y."/>
            <person name="Mizuno T."/>
            <person name="Morinaga M."/>
            <person name="Sasaki M."/>
            <person name="Togashi T."/>
            <person name="Oyama M."/>
            <person name="Hata H."/>
            <person name="Watanabe M."/>
            <person name="Komatsu T."/>
            <person name="Mizushima-Sugano J."/>
            <person name="Satoh T."/>
            <person name="Shirai Y."/>
            <person name="Takahashi Y."/>
            <person name="Nakagawa K."/>
            <person name="Okumura K."/>
            <person name="Nagase T."/>
            <person name="Nomura N."/>
            <person name="Kikuchi H."/>
            <person name="Masuho Y."/>
            <person name="Yamashita R."/>
            <person name="Nakai K."/>
            <person name="Yada T."/>
            <person name="Nakamura Y."/>
            <person name="Ohara O."/>
            <person name="Isogai T."/>
            <person name="Sugano S."/>
        </authorList>
    </citation>
    <scope>NUCLEOTIDE SEQUENCE [LARGE SCALE MRNA] (ISOFORM 1)</scope>
    <scope>VARIANT VAL-338</scope>
    <source>
        <tissue>Amygdala</tissue>
    </source>
</reference>
<reference key="5">
    <citation type="journal article" date="2005" name="DNA Res.">
        <title>Signal sequence and keyword trap in silico for selection of full-length human cDNAs encoding secretion or membrane proteins from oligo-capped cDNA libraries.</title>
        <authorList>
            <person name="Otsuki T."/>
            <person name="Ota T."/>
            <person name="Nishikawa T."/>
            <person name="Hayashi K."/>
            <person name="Suzuki Y."/>
            <person name="Yamamoto J."/>
            <person name="Wakamatsu A."/>
            <person name="Kimura K."/>
            <person name="Sakamoto K."/>
            <person name="Hatano N."/>
            <person name="Kawai Y."/>
            <person name="Ishii S."/>
            <person name="Saito K."/>
            <person name="Kojima S."/>
            <person name="Sugiyama T."/>
            <person name="Ono T."/>
            <person name="Okano K."/>
            <person name="Yoshikawa Y."/>
            <person name="Aotsuka S."/>
            <person name="Sasaki N."/>
            <person name="Hattori A."/>
            <person name="Okumura K."/>
            <person name="Nagai K."/>
            <person name="Sugano S."/>
            <person name="Isogai T."/>
        </authorList>
    </citation>
    <scope>NUCLEOTIDE SEQUENCE [LARGE SCALE MRNA] (ISOFORM 2)</scope>
    <source>
        <tissue>Teratocarcinoma</tissue>
    </source>
</reference>
<reference key="6">
    <citation type="journal article" date="2004" name="Genome Res.">
        <title>The status, quality, and expansion of the NIH full-length cDNA project: the Mammalian Gene Collection (MGC).</title>
        <authorList>
            <consortium name="The MGC Project Team"/>
        </authorList>
    </citation>
    <scope>NUCLEOTIDE SEQUENCE [LARGE SCALE MRNA] (ISOFORM 1)</scope>
    <scope>VARIANTS GLN-331 AND VAL-338</scope>
    <source>
        <tissue>Brain</tissue>
        <tissue>Placenta</tissue>
    </source>
</reference>
<reference key="7">
    <citation type="journal article" date="2011" name="BMC Syst. Biol.">
        <title>Initial characterization of the human central proteome.</title>
        <authorList>
            <person name="Burkard T.R."/>
            <person name="Planyavsky M."/>
            <person name="Kaupe I."/>
            <person name="Breitwieser F.P."/>
            <person name="Buerckstuemmer T."/>
            <person name="Bennett K.L."/>
            <person name="Superti-Furga G."/>
            <person name="Colinge J."/>
        </authorList>
    </citation>
    <scope>IDENTIFICATION BY MASS SPECTROMETRY [LARGE SCALE ANALYSIS]</scope>
</reference>
<reference key="8">
    <citation type="journal article" date="2015" name="Proteomics">
        <title>N-terminome analysis of the human mitochondrial proteome.</title>
        <authorList>
            <person name="Vaca Jacome A.S."/>
            <person name="Rabilloud T."/>
            <person name="Schaeffer-Reiss C."/>
            <person name="Rompais M."/>
            <person name="Ayoub D."/>
            <person name="Lane L."/>
            <person name="Bairoch A."/>
            <person name="Van Dorsselaer A."/>
            <person name="Carapito C."/>
        </authorList>
    </citation>
    <scope>IDENTIFICATION BY MASS SPECTROMETRY [LARGE SCALE ANALYSIS]</scope>
</reference>
<reference key="9">
    <citation type="journal article" date="2010" name="J. Biol. Chem.">
        <title>Structure of human stabilin-1 interacting chitinase-like protein (SI-CLP) reveals a saccharide-binding cleft with lower sugar-binding selectivity.</title>
        <authorList>
            <person name="Meng G."/>
            <person name="Zhao Y."/>
            <person name="Bai X."/>
            <person name="Liu Y."/>
            <person name="Green T.J."/>
            <person name="Luo M."/>
            <person name="Zheng X."/>
        </authorList>
    </citation>
    <scope>X-RAY CRYSTALLOGRAPHY (2.7 ANGSTROMS)</scope>
    <scope>TISSUE SPECIFICITY</scope>
    <scope>INDUCTION</scope>
    <scope>MUTAGENESIS OF TYR-84; TRP-88; TRP-110; TYR-261; TRP-277 AND TYR-302</scope>
    <scope>FUNCTION</scope>
</reference>
<sequence>MRTLFNLLWLALACSPVHTTLSKSDAKKAASKTLLEKSQFSDKPVQDRGLVVTDLKAESVVLEHRSYCSAKARDRHFAGDVLGYVTPWNSHGYDVTKVFGSKFTQISPVWLQLKRRGREMFEVTGLHDVDQGWMRAVRKHAKGLHIVPRLLFEDWTYDDFRNVLDSEDEIEELSKTVVQVAKNQHFDGFVVEVWNQLLSQKRVGLIHMLTHLAEALHQARLLALLVIPPAITPGTDQLGMFTHKEFEQLAPVLDGFSLMTYDYSTAHQPGPNAPLSWVRACVQVLDPKSKWRSKILLGLNFYGMDYATSKDAREPVVGARYIQTLKDHRPRMVWDSQASEHFFEYKKSRSGRHVVFYPTLKSLQVRLELARELGVGVSIWELGQGLDYFYDLL</sequence>
<proteinExistence type="evidence at protein level"/>
<protein>
    <recommendedName>
        <fullName>Chitinase domain-containing protein 1</fullName>
    </recommendedName>
    <alternativeName>
        <fullName>Stabilin-1-interacting chitinase-like protein</fullName>
        <shortName>SI-CLP</shortName>
    </alternativeName>
</protein>
<name>CHID1_HUMAN</name>
<organism>
    <name type="scientific">Homo sapiens</name>
    <name type="common">Human</name>
    <dbReference type="NCBI Taxonomy" id="9606"/>
    <lineage>
        <taxon>Eukaryota</taxon>
        <taxon>Metazoa</taxon>
        <taxon>Chordata</taxon>
        <taxon>Craniata</taxon>
        <taxon>Vertebrata</taxon>
        <taxon>Euteleostomi</taxon>
        <taxon>Mammalia</taxon>
        <taxon>Eutheria</taxon>
        <taxon>Euarchontoglires</taxon>
        <taxon>Primates</taxon>
        <taxon>Haplorrhini</taxon>
        <taxon>Catarrhini</taxon>
        <taxon>Hominidae</taxon>
        <taxon>Homo</taxon>
    </lineage>
</organism>
<gene>
    <name type="primary">CHID1</name>
    <name type="ORF">GL008</name>
    <name type="ORF">PSEC0104</name>
    <name type="ORF">SB139</name>
</gene>
<keyword id="KW-0002">3D-structure</keyword>
<keyword id="KW-0025">Alternative splicing</keyword>
<keyword id="KW-0391">Immunity</keyword>
<keyword id="KW-0399">Innate immunity</keyword>
<keyword id="KW-0458">Lysosome</keyword>
<keyword id="KW-1267">Proteomics identification</keyword>
<keyword id="KW-1185">Reference proteome</keyword>
<keyword id="KW-0964">Secreted</keyword>
<keyword id="KW-0732">Signal</keyword>
<feature type="signal peptide" evidence="1">
    <location>
        <begin position="1"/>
        <end position="19"/>
    </location>
</feature>
<feature type="chain" id="PRO_0000280608" description="Chitinase domain-containing protein 1">
    <location>
        <begin position="20"/>
        <end position="393"/>
    </location>
</feature>
<feature type="domain" description="GH18" evidence="2">
    <location>
        <begin position="79"/>
        <end position="393"/>
    </location>
</feature>
<feature type="splice variant" id="VSP_023825" description="In isoform 2." evidence="8">
    <original>K</original>
    <variation>KVKFCSCCPGWSAMARSWLTATSATQ</variation>
    <location>
        <position position="37"/>
    </location>
</feature>
<feature type="splice variant" id="VSP_023826" description="In isoform 3." evidence="9">
    <location>
        <begin position="204"/>
        <end position="234"/>
    </location>
</feature>
<feature type="sequence variant" id="VAR_031173" description="In dbSNP:rs1127800." evidence="4">
    <original>R</original>
    <variation>Q</variation>
    <location>
        <position position="331"/>
    </location>
</feature>
<feature type="sequence variant" id="VAR_031174" description="In dbSNP:rs6682." evidence="3 4 7">
    <original>A</original>
    <variation>V</variation>
    <location>
        <position position="338"/>
    </location>
</feature>
<feature type="mutagenesis site" description="Significantly decreased carbohydrate binding." evidence="6">
    <original>Y</original>
    <variation>S</variation>
    <location>
        <position position="84"/>
    </location>
</feature>
<feature type="mutagenesis site" description="Significantly decreased carbohydrate binding." evidence="6">
    <original>W</original>
    <variation>A</variation>
    <location>
        <position position="88"/>
    </location>
</feature>
<feature type="mutagenesis site" description="Significantly decreased carbohydrate binding." evidence="6">
    <original>W</original>
    <variation>A</variation>
    <location>
        <position position="110"/>
    </location>
</feature>
<feature type="mutagenesis site" description="Significantly decreased carbohydrate binding." evidence="6">
    <original>Y</original>
    <variation>S</variation>
    <location>
        <position position="261"/>
    </location>
</feature>
<feature type="mutagenesis site" description="No noticeable effect." evidence="6">
    <original>W</original>
    <variation>A</variation>
    <location>
        <position position="277"/>
    </location>
</feature>
<feature type="mutagenesis site" description="Significantly decreased carbohydrate binding." evidence="6">
    <original>Y</original>
    <variation>S</variation>
    <location>
        <position position="302"/>
    </location>
</feature>
<feature type="sequence conflict" description="In Ref. 4; BAB55316." evidence="10" ref="4">
    <original>D</original>
    <variation>G</variation>
    <location>
        <position position="335"/>
    </location>
</feature>
<feature type="helix" evidence="11">
    <location>
        <begin position="45"/>
        <end position="47"/>
    </location>
</feature>
<feature type="helix" evidence="11">
    <location>
        <begin position="57"/>
        <end position="63"/>
    </location>
</feature>
<feature type="turn" evidence="11">
    <location>
        <begin position="70"/>
        <end position="73"/>
    </location>
</feature>
<feature type="strand" evidence="11">
    <location>
        <begin position="81"/>
        <end position="86"/>
    </location>
</feature>
<feature type="helix" evidence="11">
    <location>
        <begin position="91"/>
        <end position="99"/>
    </location>
</feature>
<feature type="helix" evidence="11">
    <location>
        <begin position="100"/>
        <end position="102"/>
    </location>
</feature>
<feature type="strand" evidence="11">
    <location>
        <begin position="104"/>
        <end position="108"/>
    </location>
</feature>
<feature type="strand" evidence="11">
    <location>
        <begin position="111"/>
        <end position="117"/>
    </location>
</feature>
<feature type="strand" evidence="11">
    <location>
        <begin position="120"/>
        <end position="124"/>
    </location>
</feature>
<feature type="helix" evidence="11">
    <location>
        <begin position="126"/>
        <end position="128"/>
    </location>
</feature>
<feature type="helix" evidence="11">
    <location>
        <begin position="131"/>
        <end position="140"/>
    </location>
</feature>
<feature type="strand" evidence="11">
    <location>
        <begin position="141"/>
        <end position="143"/>
    </location>
</feature>
<feature type="strand" evidence="11">
    <location>
        <begin position="149"/>
        <end position="152"/>
    </location>
</feature>
<feature type="helix" evidence="11">
    <location>
        <begin position="157"/>
        <end position="164"/>
    </location>
</feature>
<feature type="helix" evidence="11">
    <location>
        <begin position="167"/>
        <end position="184"/>
    </location>
</feature>
<feature type="strand" evidence="11">
    <location>
        <begin position="188"/>
        <end position="192"/>
    </location>
</feature>
<feature type="helix" evidence="11">
    <location>
        <begin position="194"/>
        <end position="196"/>
    </location>
</feature>
<feature type="helix" evidence="11">
    <location>
        <begin position="202"/>
        <end position="218"/>
    </location>
</feature>
<feature type="strand" evidence="11">
    <location>
        <begin position="222"/>
        <end position="227"/>
    </location>
</feature>
<feature type="turn" evidence="11">
    <location>
        <begin position="233"/>
        <end position="235"/>
    </location>
</feature>
<feature type="strand" evidence="11">
    <location>
        <begin position="236"/>
        <end position="238"/>
    </location>
</feature>
<feature type="helix" evidence="11">
    <location>
        <begin position="243"/>
        <end position="249"/>
    </location>
</feature>
<feature type="turn" evidence="11">
    <location>
        <begin position="250"/>
        <end position="252"/>
    </location>
</feature>
<feature type="strand" evidence="11">
    <location>
        <begin position="254"/>
        <end position="258"/>
    </location>
</feature>
<feature type="helix" evidence="11">
    <location>
        <begin position="275"/>
        <end position="285"/>
    </location>
</feature>
<feature type="helix" evidence="11">
    <location>
        <begin position="292"/>
        <end position="294"/>
    </location>
</feature>
<feature type="strand" evidence="11">
    <location>
        <begin position="295"/>
        <end position="307"/>
    </location>
</feature>
<feature type="turn" evidence="11">
    <location>
        <begin position="308"/>
        <end position="311"/>
    </location>
</feature>
<feature type="strand" evidence="11">
    <location>
        <begin position="312"/>
        <end position="316"/>
    </location>
</feature>
<feature type="helix" evidence="11">
    <location>
        <begin position="318"/>
        <end position="328"/>
    </location>
</feature>
<feature type="strand" evidence="11">
    <location>
        <begin position="333"/>
        <end position="335"/>
    </location>
</feature>
<feature type="turn" evidence="11">
    <location>
        <begin position="336"/>
        <end position="339"/>
    </location>
</feature>
<feature type="strand" evidence="11">
    <location>
        <begin position="340"/>
        <end position="347"/>
    </location>
</feature>
<feature type="turn" evidence="11">
    <location>
        <begin position="348"/>
        <end position="350"/>
    </location>
</feature>
<feature type="strand" evidence="11">
    <location>
        <begin position="351"/>
        <end position="356"/>
    </location>
</feature>
<feature type="helix" evidence="11">
    <location>
        <begin position="360"/>
        <end position="373"/>
    </location>
</feature>
<feature type="strand" evidence="11">
    <location>
        <begin position="376"/>
        <end position="380"/>
    </location>
</feature>
<feature type="helix" evidence="11">
    <location>
        <begin position="387"/>
        <end position="392"/>
    </location>
</feature>
<evidence type="ECO:0000255" key="1"/>
<evidence type="ECO:0000255" key="2">
    <source>
        <dbReference type="PROSITE-ProRule" id="PRU01258"/>
    </source>
</evidence>
<evidence type="ECO:0000269" key="3">
    <source>
    </source>
</evidence>
<evidence type="ECO:0000269" key="4">
    <source>
    </source>
</evidence>
<evidence type="ECO:0000269" key="5">
    <source>
    </source>
</evidence>
<evidence type="ECO:0000269" key="6">
    <source>
    </source>
</evidence>
<evidence type="ECO:0000269" key="7">
    <source ref="2"/>
</evidence>
<evidence type="ECO:0000303" key="8">
    <source>
    </source>
</evidence>
<evidence type="ECO:0000303" key="9">
    <source ref="3"/>
</evidence>
<evidence type="ECO:0000305" key="10"/>
<evidence type="ECO:0007829" key="11">
    <source>
        <dbReference type="PDB" id="3BXW"/>
    </source>
</evidence>
<dbReference type="EMBL" id="BN000479">
    <property type="protein sequence ID" value="CAF32458.1"/>
    <property type="molecule type" value="mRNA"/>
</dbReference>
<dbReference type="EMBL" id="AF212229">
    <property type="protein sequence ID" value="AAK14915.1"/>
    <property type="molecule type" value="mRNA"/>
</dbReference>
<dbReference type="EMBL" id="AY037151">
    <property type="protein sequence ID" value="AAK67632.1"/>
    <property type="molecule type" value="mRNA"/>
</dbReference>
<dbReference type="EMBL" id="AK027711">
    <property type="protein sequence ID" value="BAB55316.1"/>
    <property type="molecule type" value="mRNA"/>
</dbReference>
<dbReference type="EMBL" id="AK075413">
    <property type="protein sequence ID" value="BAC11603.1"/>
    <property type="molecule type" value="mRNA"/>
</dbReference>
<dbReference type="EMBL" id="AK124697">
    <property type="protein sequence ID" value="BAG54072.1"/>
    <property type="molecule type" value="mRNA"/>
</dbReference>
<dbReference type="EMBL" id="BC000001">
    <property type="protein sequence ID" value="AAH00001.1"/>
    <property type="molecule type" value="mRNA"/>
</dbReference>
<dbReference type="EMBL" id="BC013642">
    <property type="protein sequence ID" value="AAH13642.1"/>
    <property type="molecule type" value="mRNA"/>
</dbReference>
<dbReference type="EMBL" id="BC095409">
    <property type="protein sequence ID" value="AAH95409.1"/>
    <property type="molecule type" value="mRNA"/>
</dbReference>
<dbReference type="CCDS" id="CCDS44510.1">
    <molecule id="Q9BWS9-3"/>
</dbReference>
<dbReference type="CCDS" id="CCDS44511.1">
    <molecule id="Q9BWS9-2"/>
</dbReference>
<dbReference type="CCDS" id="CCDS7722.1">
    <molecule id="Q9BWS9-1"/>
</dbReference>
<dbReference type="RefSeq" id="NP_001136146.1">
    <molecule id="Q9BWS9-1"/>
    <property type="nucleotide sequence ID" value="NM_001142674.2"/>
</dbReference>
<dbReference type="RefSeq" id="NP_001136147.1">
    <molecule id="Q9BWS9-1"/>
    <property type="nucleotide sequence ID" value="NM_001142675.2"/>
</dbReference>
<dbReference type="RefSeq" id="NP_001136148.1">
    <molecule id="Q9BWS9-2"/>
    <property type="nucleotide sequence ID" value="NM_001142676.2"/>
</dbReference>
<dbReference type="RefSeq" id="NP_001136149.1">
    <molecule id="Q9BWS9-3"/>
    <property type="nucleotide sequence ID" value="NM_001142677.2"/>
</dbReference>
<dbReference type="RefSeq" id="NP_076436.3">
    <molecule id="Q9BWS9-1"/>
    <property type="nucleotide sequence ID" value="NM_023947.3"/>
</dbReference>
<dbReference type="RefSeq" id="XP_005253130.1">
    <property type="nucleotide sequence ID" value="XM_005253073.4"/>
</dbReference>
<dbReference type="RefSeq" id="XP_006718345.1">
    <property type="nucleotide sequence ID" value="XM_006718282.2"/>
</dbReference>
<dbReference type="RefSeq" id="XP_016873655.1">
    <molecule id="Q9BWS9-1"/>
    <property type="nucleotide sequence ID" value="XM_017018166.2"/>
</dbReference>
<dbReference type="RefSeq" id="XP_047283435.1">
    <molecule id="Q9BWS9-1"/>
    <property type="nucleotide sequence ID" value="XM_047427479.1"/>
</dbReference>
<dbReference type="RefSeq" id="XP_047283436.1">
    <molecule id="Q9BWS9-1"/>
    <property type="nucleotide sequence ID" value="XM_047427480.1"/>
</dbReference>
<dbReference type="RefSeq" id="XP_047283437.1">
    <molecule id="Q9BWS9-1"/>
    <property type="nucleotide sequence ID" value="XM_047427481.1"/>
</dbReference>
<dbReference type="RefSeq" id="XP_047283440.1">
    <molecule id="Q9BWS9-3"/>
    <property type="nucleotide sequence ID" value="XM_047427484.1"/>
</dbReference>
<dbReference type="PDB" id="3BXW">
    <property type="method" value="X-ray"/>
    <property type="resolution" value="2.70 A"/>
    <property type="chains" value="A/B=1-393"/>
</dbReference>
<dbReference type="PDBsum" id="3BXW"/>
<dbReference type="SMR" id="Q9BWS9"/>
<dbReference type="BioGRID" id="122451">
    <property type="interactions" value="98"/>
</dbReference>
<dbReference type="FunCoup" id="Q9BWS9">
    <property type="interactions" value="947"/>
</dbReference>
<dbReference type="IntAct" id="Q9BWS9">
    <property type="interactions" value="43"/>
</dbReference>
<dbReference type="MINT" id="Q9BWS9"/>
<dbReference type="STRING" id="9606.ENSP00000398722"/>
<dbReference type="UniLectin" id="Q9BWS9"/>
<dbReference type="GlyGen" id="Q9BWS9">
    <property type="glycosylation" value="1 site"/>
</dbReference>
<dbReference type="iPTMnet" id="Q9BWS9"/>
<dbReference type="PhosphoSitePlus" id="Q9BWS9"/>
<dbReference type="SwissPalm" id="Q9BWS9"/>
<dbReference type="BioMuta" id="CHID1"/>
<dbReference type="DMDM" id="74733460"/>
<dbReference type="jPOST" id="Q9BWS9"/>
<dbReference type="MassIVE" id="Q9BWS9"/>
<dbReference type="PaxDb" id="9606-ENSP00000398722"/>
<dbReference type="PeptideAtlas" id="Q9BWS9"/>
<dbReference type="ProteomicsDB" id="79306">
    <molecule id="Q9BWS9-1"/>
</dbReference>
<dbReference type="ProteomicsDB" id="79307">
    <molecule id="Q9BWS9-2"/>
</dbReference>
<dbReference type="ProteomicsDB" id="79308">
    <molecule id="Q9BWS9-3"/>
</dbReference>
<dbReference type="Pumba" id="Q9BWS9"/>
<dbReference type="TopDownProteomics" id="Q9BWS9-2">
    <molecule id="Q9BWS9-2"/>
</dbReference>
<dbReference type="Antibodypedia" id="10139">
    <property type="antibodies" value="208 antibodies from 25 providers"/>
</dbReference>
<dbReference type="DNASU" id="66005"/>
<dbReference type="Ensembl" id="ENST00000323578.13">
    <molecule id="Q9BWS9-1"/>
    <property type="protein sequence ID" value="ENSP00000325055.8"/>
    <property type="gene ID" value="ENSG00000177830.18"/>
</dbReference>
<dbReference type="Ensembl" id="ENST00000429789.6">
    <molecule id="Q9BWS9-3"/>
    <property type="protein sequence ID" value="ENSP00000416034.2"/>
    <property type="gene ID" value="ENSG00000177830.18"/>
</dbReference>
<dbReference type="Ensembl" id="ENST00000436108.6">
    <molecule id="Q9BWS9-1"/>
    <property type="protein sequence ID" value="ENSP00000388156.2"/>
    <property type="gene ID" value="ENSG00000177830.18"/>
</dbReference>
<dbReference type="Ensembl" id="ENST00000449825.5">
    <molecule id="Q9BWS9-1"/>
    <property type="protein sequence ID" value="ENSP00000391255.1"/>
    <property type="gene ID" value="ENSG00000177830.18"/>
</dbReference>
<dbReference type="Ensembl" id="ENST00000454838.6">
    <molecule id="Q9BWS9-2"/>
    <property type="protein sequence ID" value="ENSP00000398722.2"/>
    <property type="gene ID" value="ENSG00000177830.18"/>
</dbReference>
<dbReference type="Ensembl" id="ENST00000528581.5">
    <molecule id="Q9BWS9-2"/>
    <property type="protein sequence ID" value="ENSP00000435503.1"/>
    <property type="gene ID" value="ENSG00000177830.18"/>
</dbReference>
<dbReference type="GeneID" id="66005"/>
<dbReference type="KEGG" id="hsa:66005"/>
<dbReference type="MANE-Select" id="ENST00000323578.13">
    <property type="protein sequence ID" value="ENSP00000325055.8"/>
    <property type="RefSeq nucleotide sequence ID" value="NM_023947.4"/>
    <property type="RefSeq protein sequence ID" value="NP_076436.3"/>
</dbReference>
<dbReference type="UCSC" id="uc001lsm.4">
    <molecule id="Q9BWS9-1"/>
    <property type="organism name" value="human"/>
</dbReference>
<dbReference type="AGR" id="HGNC:28474"/>
<dbReference type="CTD" id="66005"/>
<dbReference type="DisGeNET" id="66005"/>
<dbReference type="GeneCards" id="CHID1"/>
<dbReference type="HGNC" id="HGNC:28474">
    <property type="gene designation" value="CHID1"/>
</dbReference>
<dbReference type="HPA" id="ENSG00000177830">
    <property type="expression patterns" value="Low tissue specificity"/>
</dbReference>
<dbReference type="MIM" id="615692">
    <property type="type" value="gene"/>
</dbReference>
<dbReference type="neXtProt" id="NX_Q9BWS9"/>
<dbReference type="OpenTargets" id="ENSG00000177830"/>
<dbReference type="PharmGKB" id="PA142672118"/>
<dbReference type="VEuPathDB" id="HostDB:ENSG00000177830"/>
<dbReference type="eggNOG" id="KOG2091">
    <property type="taxonomic scope" value="Eukaryota"/>
</dbReference>
<dbReference type="GeneTree" id="ENSGT00390000012069"/>
<dbReference type="HOGENOM" id="CLU_035132_2_0_1"/>
<dbReference type="InParanoid" id="Q9BWS9"/>
<dbReference type="OMA" id="YSINERI"/>
<dbReference type="OrthoDB" id="10254444at2759"/>
<dbReference type="PAN-GO" id="Q9BWS9">
    <property type="GO annotations" value="2 GO annotations based on evolutionary models"/>
</dbReference>
<dbReference type="PhylomeDB" id="Q9BWS9"/>
<dbReference type="TreeFam" id="TF319271"/>
<dbReference type="PathwayCommons" id="Q9BWS9"/>
<dbReference type="Reactome" id="R-HSA-114608">
    <property type="pathway name" value="Platelet degranulation"/>
</dbReference>
<dbReference type="SignaLink" id="Q9BWS9"/>
<dbReference type="BioGRID-ORCS" id="66005">
    <property type="hits" value="12 hits in 1154 CRISPR screens"/>
</dbReference>
<dbReference type="ChiTaRS" id="CHID1">
    <property type="organism name" value="human"/>
</dbReference>
<dbReference type="EvolutionaryTrace" id="Q9BWS9"/>
<dbReference type="GenomeRNAi" id="66005"/>
<dbReference type="Pharos" id="Q9BWS9">
    <property type="development level" value="Tbio"/>
</dbReference>
<dbReference type="PRO" id="PR:Q9BWS9"/>
<dbReference type="Proteomes" id="UP000005640">
    <property type="component" value="Chromosome 11"/>
</dbReference>
<dbReference type="RNAct" id="Q9BWS9">
    <property type="molecule type" value="protein"/>
</dbReference>
<dbReference type="Bgee" id="ENSG00000177830">
    <property type="expression patterns" value="Expressed in stromal cell of endometrium and 182 other cell types or tissues"/>
</dbReference>
<dbReference type="ExpressionAtlas" id="Q9BWS9">
    <property type="expression patterns" value="baseline and differential"/>
</dbReference>
<dbReference type="GO" id="GO:0012505">
    <property type="term" value="C:endomembrane system"/>
    <property type="evidence" value="ECO:0000318"/>
    <property type="project" value="GO_Central"/>
</dbReference>
<dbReference type="GO" id="GO:0070062">
    <property type="term" value="C:extracellular exosome"/>
    <property type="evidence" value="ECO:0007005"/>
    <property type="project" value="UniProtKB"/>
</dbReference>
<dbReference type="GO" id="GO:0005576">
    <property type="term" value="C:extracellular region"/>
    <property type="evidence" value="ECO:0000304"/>
    <property type="project" value="Reactome"/>
</dbReference>
<dbReference type="GO" id="GO:0005615">
    <property type="term" value="C:extracellular space"/>
    <property type="evidence" value="ECO:0000314"/>
    <property type="project" value="UniProtKB"/>
</dbReference>
<dbReference type="GO" id="GO:0005770">
    <property type="term" value="C:late endosome"/>
    <property type="evidence" value="ECO:0000314"/>
    <property type="project" value="UniProtKB"/>
</dbReference>
<dbReference type="GO" id="GO:0043202">
    <property type="term" value="C:lysosomal lumen"/>
    <property type="evidence" value="ECO:0000304"/>
    <property type="project" value="Reactome"/>
</dbReference>
<dbReference type="GO" id="GO:0005764">
    <property type="term" value="C:lysosome"/>
    <property type="evidence" value="ECO:0000314"/>
    <property type="project" value="UniProtKB"/>
</dbReference>
<dbReference type="GO" id="GO:0016020">
    <property type="term" value="C:membrane"/>
    <property type="evidence" value="ECO:0007005"/>
    <property type="project" value="UniProtKB"/>
</dbReference>
<dbReference type="GO" id="GO:0005634">
    <property type="term" value="C:nucleus"/>
    <property type="evidence" value="ECO:0007005"/>
    <property type="project" value="UniProtKB"/>
</dbReference>
<dbReference type="GO" id="GO:0005802">
    <property type="term" value="C:trans-Golgi network"/>
    <property type="evidence" value="ECO:0000314"/>
    <property type="project" value="UniProtKB"/>
</dbReference>
<dbReference type="GO" id="GO:0008061">
    <property type="term" value="F:chitin binding"/>
    <property type="evidence" value="ECO:0007669"/>
    <property type="project" value="InterPro"/>
</dbReference>
<dbReference type="GO" id="GO:0070492">
    <property type="term" value="F:oligosaccharide binding"/>
    <property type="evidence" value="ECO:0000353"/>
    <property type="project" value="UniProtKB"/>
</dbReference>
<dbReference type="GO" id="GO:0005975">
    <property type="term" value="P:carbohydrate metabolic process"/>
    <property type="evidence" value="ECO:0007669"/>
    <property type="project" value="InterPro"/>
</dbReference>
<dbReference type="GO" id="GO:0045087">
    <property type="term" value="P:innate immune response"/>
    <property type="evidence" value="ECO:0007669"/>
    <property type="project" value="UniProtKB-KW"/>
</dbReference>
<dbReference type="GO" id="GO:1900016">
    <property type="term" value="P:negative regulation of cytokine production involved in inflammatory response"/>
    <property type="evidence" value="ECO:0000314"/>
    <property type="project" value="UniProtKB"/>
</dbReference>
<dbReference type="CDD" id="cd02876">
    <property type="entry name" value="GH18_SI-CLP"/>
    <property type="match status" value="1"/>
</dbReference>
<dbReference type="FunFam" id="3.10.50.10:FF:000002">
    <property type="entry name" value="Chitinase domain-containing protein 1"/>
    <property type="match status" value="1"/>
</dbReference>
<dbReference type="FunFam" id="3.20.20.80:FF:000028">
    <property type="entry name" value="Chitinase domain-containing protein 1"/>
    <property type="match status" value="1"/>
</dbReference>
<dbReference type="Gene3D" id="3.10.50.10">
    <property type="match status" value="1"/>
</dbReference>
<dbReference type="Gene3D" id="1.10.8.360">
    <property type="entry name" value="3,6-anhydro-alpha-l-galactosidase"/>
    <property type="match status" value="1"/>
</dbReference>
<dbReference type="Gene3D" id="3.20.20.80">
    <property type="entry name" value="Glycosidases"/>
    <property type="match status" value="1"/>
</dbReference>
<dbReference type="InterPro" id="IPR011583">
    <property type="entry name" value="Chitinase_II/V-like_cat"/>
</dbReference>
<dbReference type="InterPro" id="IPR029070">
    <property type="entry name" value="Chitinase_insertion_sf"/>
</dbReference>
<dbReference type="InterPro" id="IPR001223">
    <property type="entry name" value="Glyco_hydro18_cat"/>
</dbReference>
<dbReference type="InterPro" id="IPR017853">
    <property type="entry name" value="Glycoside_hydrolase_SF"/>
</dbReference>
<dbReference type="PANTHER" id="PTHR46066:SF2">
    <property type="entry name" value="CHITINASE DOMAIN-CONTAINING PROTEIN 1"/>
    <property type="match status" value="1"/>
</dbReference>
<dbReference type="PANTHER" id="PTHR46066">
    <property type="entry name" value="CHITINASE DOMAIN-CONTAINING PROTEIN 1 FAMILY MEMBER"/>
    <property type="match status" value="1"/>
</dbReference>
<dbReference type="Pfam" id="PF00704">
    <property type="entry name" value="Glyco_hydro_18"/>
    <property type="match status" value="1"/>
</dbReference>
<dbReference type="SMART" id="SM00636">
    <property type="entry name" value="Glyco_18"/>
    <property type="match status" value="1"/>
</dbReference>
<dbReference type="SUPFAM" id="SSF51445">
    <property type="entry name" value="(Trans)glycosidases"/>
    <property type="match status" value="1"/>
</dbReference>
<dbReference type="PROSITE" id="PS51910">
    <property type="entry name" value="GH18_2"/>
    <property type="match status" value="1"/>
</dbReference>
<comment type="function">
    <text evidence="6">Saccharide- and LPS-binding protein with possible roles in pathogen sensing and endotoxin neutralization. Ligand-binding specificity relates to the length of the oligosaccharides, with preference for chitotetraose (in vitro).</text>
</comment>
<comment type="subunit">
    <text evidence="5">Interacts with STAB1.</text>
</comment>
<comment type="subcellular location">
    <subcellularLocation>
        <location evidence="5">Secreted</location>
    </subcellularLocation>
    <subcellularLocation>
        <location evidence="5">Lysosome</location>
    </subcellularLocation>
</comment>
<comment type="alternative products">
    <event type="alternative splicing"/>
    <isoform>
        <id>Q9BWS9-1</id>
        <name>1</name>
        <sequence type="displayed"/>
    </isoform>
    <isoform>
        <id>Q9BWS9-2</id>
        <name>2</name>
        <sequence type="described" ref="VSP_023825"/>
    </isoform>
    <isoform>
        <id>Q9BWS9-3</id>
        <name>3</name>
        <sequence type="described" ref="VSP_023826"/>
    </isoform>
</comment>
<comment type="tissue specificity">
    <text evidence="5 6">Expressed in cells of monocytic, T, B and epithelial origin.</text>
</comment>
<comment type="induction">
    <text evidence="5 6">Up-regulated by IL4/interleukin-4 and dexamethasone in the macrophages. Up-regulated by glucocorticoid.</text>
</comment>
<comment type="similarity">
    <text evidence="10">Belongs to the glycosyl hydrolase 18 family.</text>
</comment>